<keyword id="KW-0007">Acetylation</keyword>
<keyword id="KW-0153">Cholesterol metabolism</keyword>
<keyword id="KW-0349">Heme</keyword>
<keyword id="KW-0408">Iron</keyword>
<keyword id="KW-0444">Lipid biosynthesis</keyword>
<keyword id="KW-0443">Lipid metabolism</keyword>
<keyword id="KW-0472">Membrane</keyword>
<keyword id="KW-0479">Metal-binding</keyword>
<keyword id="KW-0496">Mitochondrion</keyword>
<keyword id="KW-0999">Mitochondrion inner membrane</keyword>
<keyword id="KW-0503">Monooxygenase</keyword>
<keyword id="KW-0560">Oxidoreductase</keyword>
<keyword id="KW-1185">Reference proteome</keyword>
<keyword id="KW-0752">Steroid biosynthesis</keyword>
<keyword id="KW-0753">Steroid metabolism</keyword>
<keyword id="KW-1207">Sterol metabolism</keyword>
<keyword id="KW-0809">Transit peptide</keyword>
<name>CP27A_MOUSE</name>
<organism>
    <name type="scientific">Mus musculus</name>
    <name type="common">Mouse</name>
    <dbReference type="NCBI Taxonomy" id="10090"/>
    <lineage>
        <taxon>Eukaryota</taxon>
        <taxon>Metazoa</taxon>
        <taxon>Chordata</taxon>
        <taxon>Craniata</taxon>
        <taxon>Vertebrata</taxon>
        <taxon>Euteleostomi</taxon>
        <taxon>Mammalia</taxon>
        <taxon>Eutheria</taxon>
        <taxon>Euarchontoglires</taxon>
        <taxon>Glires</taxon>
        <taxon>Rodentia</taxon>
        <taxon>Myomorpha</taxon>
        <taxon>Muroidea</taxon>
        <taxon>Muridae</taxon>
        <taxon>Murinae</taxon>
        <taxon>Mus</taxon>
        <taxon>Mus</taxon>
    </lineage>
</organism>
<protein>
    <recommendedName>
        <fullName evidence="2">Sterol 26-hydroxylase, mitochondrial</fullName>
        <ecNumber evidence="2 4">1.14.15.15</ecNumber>
    </recommendedName>
    <alternativeName>
        <fullName evidence="4">5-beta-cholestane-3-alpha,7-alpha,12-alpha-triol 26-hydroxylase</fullName>
    </alternativeName>
    <alternativeName>
        <fullName>Cytochrome P-450C27/25</fullName>
    </alternativeName>
    <alternativeName>
        <fullName>Cytochrome P450 27</fullName>
    </alternativeName>
    <alternativeName>
        <fullName evidence="4">Sterol 27-hydroxylase</fullName>
    </alternativeName>
    <alternativeName>
        <fullName evidence="4">Vitamin D(3) 25-hydroxylase</fullName>
    </alternativeName>
</protein>
<evidence type="ECO:0000250" key="1"/>
<evidence type="ECO:0000250" key="2">
    <source>
        <dbReference type="UniProtKB" id="P17177"/>
    </source>
</evidence>
<evidence type="ECO:0000250" key="3">
    <source>
        <dbReference type="UniProtKB" id="P17178"/>
    </source>
</evidence>
<evidence type="ECO:0000250" key="4">
    <source>
        <dbReference type="UniProtKB" id="Q02318"/>
    </source>
</evidence>
<evidence type="ECO:0000255" key="5"/>
<evidence type="ECO:0000256" key="6">
    <source>
        <dbReference type="SAM" id="MobiDB-lite"/>
    </source>
</evidence>
<evidence type="ECO:0000269" key="7">
    <source>
    </source>
</evidence>
<evidence type="ECO:0000305" key="8"/>
<evidence type="ECO:0000312" key="9">
    <source>
        <dbReference type="MGI" id="MGI:88594"/>
    </source>
</evidence>
<evidence type="ECO:0007744" key="10">
    <source>
    </source>
</evidence>
<gene>
    <name evidence="9" type="primary">Cyp27a1</name>
</gene>
<dbReference type="EC" id="1.14.15.15" evidence="2 4"/>
<dbReference type="EMBL" id="AK004977">
    <property type="protein sequence ID" value="BAB23713.1"/>
    <property type="molecule type" value="mRNA"/>
</dbReference>
<dbReference type="EMBL" id="BC055028">
    <property type="protein sequence ID" value="AAH55028.1"/>
    <property type="molecule type" value="mRNA"/>
</dbReference>
<dbReference type="CCDS" id="CCDS15054.1"/>
<dbReference type="RefSeq" id="NP_077226.2">
    <property type="nucleotide sequence ID" value="NM_024264.5"/>
</dbReference>
<dbReference type="SMR" id="Q9DBG1"/>
<dbReference type="BioGRID" id="222345">
    <property type="interactions" value="10"/>
</dbReference>
<dbReference type="FunCoup" id="Q9DBG1">
    <property type="interactions" value="903"/>
</dbReference>
<dbReference type="STRING" id="10090.ENSMUSP00000027356"/>
<dbReference type="GlyGen" id="Q9DBG1">
    <property type="glycosylation" value="1 site, 1 O-linked glycan (1 site)"/>
</dbReference>
<dbReference type="iPTMnet" id="Q9DBG1"/>
<dbReference type="PhosphoSitePlus" id="Q9DBG1"/>
<dbReference type="SwissPalm" id="Q9DBG1"/>
<dbReference type="jPOST" id="Q9DBG1"/>
<dbReference type="PaxDb" id="10090-ENSMUSP00000027356"/>
<dbReference type="PeptideAtlas" id="Q9DBG1"/>
<dbReference type="ProteomicsDB" id="283810"/>
<dbReference type="Antibodypedia" id="34289">
    <property type="antibodies" value="300 antibodies from 34 providers"/>
</dbReference>
<dbReference type="DNASU" id="104086"/>
<dbReference type="Ensembl" id="ENSMUST00000027356.7">
    <property type="protein sequence ID" value="ENSMUSP00000027356.6"/>
    <property type="gene ID" value="ENSMUSG00000026170.7"/>
</dbReference>
<dbReference type="GeneID" id="104086"/>
<dbReference type="KEGG" id="mmu:104086"/>
<dbReference type="UCSC" id="uc007bna.1">
    <property type="organism name" value="mouse"/>
</dbReference>
<dbReference type="AGR" id="MGI:88594"/>
<dbReference type="CTD" id="1593"/>
<dbReference type="MGI" id="MGI:88594">
    <property type="gene designation" value="Cyp27a1"/>
</dbReference>
<dbReference type="VEuPathDB" id="HostDB:ENSMUSG00000026170"/>
<dbReference type="eggNOG" id="KOG0159">
    <property type="taxonomic scope" value="Eukaryota"/>
</dbReference>
<dbReference type="GeneTree" id="ENSGT00950000182905"/>
<dbReference type="HOGENOM" id="CLU_001570_28_3_1"/>
<dbReference type="InParanoid" id="Q9DBG1"/>
<dbReference type="OMA" id="GPQTHVN"/>
<dbReference type="OrthoDB" id="3945418at2759"/>
<dbReference type="PhylomeDB" id="Q9DBG1"/>
<dbReference type="TreeFam" id="TF105094"/>
<dbReference type="BRENDA" id="1.14.15.15">
    <property type="organism ID" value="3474"/>
</dbReference>
<dbReference type="Reactome" id="R-MMU-193368">
    <property type="pathway name" value="Synthesis of bile acids and bile salts via 7alpha-hydroxycholesterol"/>
</dbReference>
<dbReference type="Reactome" id="R-MMU-193775">
    <property type="pathway name" value="Synthesis of bile acids and bile salts via 24-hydroxycholesterol"/>
</dbReference>
<dbReference type="Reactome" id="R-MMU-193807">
    <property type="pathway name" value="Synthesis of bile acids and bile salts via 27-hydroxycholesterol"/>
</dbReference>
<dbReference type="Reactome" id="R-MMU-211976">
    <property type="pathway name" value="Endogenous sterols"/>
</dbReference>
<dbReference type="UniPathway" id="UPA00221"/>
<dbReference type="UniPathway" id="UPA00955"/>
<dbReference type="UniPathway" id="UPA01058"/>
<dbReference type="BioGRID-ORCS" id="104086">
    <property type="hits" value="3 hits in 78 CRISPR screens"/>
</dbReference>
<dbReference type="PRO" id="PR:Q9DBG1"/>
<dbReference type="Proteomes" id="UP000000589">
    <property type="component" value="Chromosome 1"/>
</dbReference>
<dbReference type="RNAct" id="Q9DBG1">
    <property type="molecule type" value="protein"/>
</dbReference>
<dbReference type="Bgee" id="ENSMUSG00000026170">
    <property type="expression patterns" value="Expressed in left lobe of liver and 199 other cell types or tissues"/>
</dbReference>
<dbReference type="GO" id="GO:0005743">
    <property type="term" value="C:mitochondrial inner membrane"/>
    <property type="evidence" value="ECO:0007005"/>
    <property type="project" value="MGI"/>
</dbReference>
<dbReference type="GO" id="GO:0005739">
    <property type="term" value="C:mitochondrion"/>
    <property type="evidence" value="ECO:0007005"/>
    <property type="project" value="MGI"/>
</dbReference>
<dbReference type="GO" id="GO:0047748">
    <property type="term" value="F:cholestanetetraol 26-dehydrogenase activity"/>
    <property type="evidence" value="ECO:0000250"/>
    <property type="project" value="UniProtKB"/>
</dbReference>
<dbReference type="GO" id="GO:0031073">
    <property type="term" value="F:cholesterol 26-hydroxylase activity"/>
    <property type="evidence" value="ECO:0000250"/>
    <property type="project" value="UniProtKB"/>
</dbReference>
<dbReference type="GO" id="GO:0008123">
    <property type="term" value="F:cholesterol 7-alpha-monooxygenase activity"/>
    <property type="evidence" value="ECO:0000250"/>
    <property type="project" value="UniProtKB"/>
</dbReference>
<dbReference type="GO" id="GO:0008386">
    <property type="term" value="F:cholesterol monooxygenase (side-chain-cleaving) activity"/>
    <property type="evidence" value="ECO:0000250"/>
    <property type="project" value="UniProtKB"/>
</dbReference>
<dbReference type="GO" id="GO:0020037">
    <property type="term" value="F:heme binding"/>
    <property type="evidence" value="ECO:0000250"/>
    <property type="project" value="UniProtKB"/>
</dbReference>
<dbReference type="GO" id="GO:0030544">
    <property type="term" value="F:Hsp70 protein binding"/>
    <property type="evidence" value="ECO:0000250"/>
    <property type="project" value="UniProtKB"/>
</dbReference>
<dbReference type="GO" id="GO:0005506">
    <property type="term" value="F:iron ion binding"/>
    <property type="evidence" value="ECO:0007669"/>
    <property type="project" value="InterPro"/>
</dbReference>
<dbReference type="GO" id="GO:0030343">
    <property type="term" value="F:vitamin D3 25-hydroxylase activity"/>
    <property type="evidence" value="ECO:0000250"/>
    <property type="project" value="UniProtKB"/>
</dbReference>
<dbReference type="GO" id="GO:0006699">
    <property type="term" value="P:bile acid biosynthetic process"/>
    <property type="evidence" value="ECO:0000250"/>
    <property type="project" value="UniProtKB"/>
</dbReference>
<dbReference type="GO" id="GO:0006700">
    <property type="term" value="P:C21-steroid hormone biosynthetic process"/>
    <property type="evidence" value="ECO:0000250"/>
    <property type="project" value="UniProtKB"/>
</dbReference>
<dbReference type="GO" id="GO:0036378">
    <property type="term" value="P:calcitriol biosynthetic process from calciol"/>
    <property type="evidence" value="ECO:0000250"/>
    <property type="project" value="UniProtKB"/>
</dbReference>
<dbReference type="GO" id="GO:0006707">
    <property type="term" value="P:cholesterol catabolic process"/>
    <property type="evidence" value="ECO:0000250"/>
    <property type="project" value="UniProtKB"/>
</dbReference>
<dbReference type="FunFam" id="1.10.630.10:FF:000006">
    <property type="entry name" value="Cytochrome P450 302a1, mitochondrial"/>
    <property type="match status" value="1"/>
</dbReference>
<dbReference type="Gene3D" id="1.10.630.10">
    <property type="entry name" value="Cytochrome P450"/>
    <property type="match status" value="1"/>
</dbReference>
<dbReference type="InterPro" id="IPR050479">
    <property type="entry name" value="CYP11_CYP27_families"/>
</dbReference>
<dbReference type="InterPro" id="IPR001128">
    <property type="entry name" value="Cyt_P450"/>
</dbReference>
<dbReference type="InterPro" id="IPR017972">
    <property type="entry name" value="Cyt_P450_CS"/>
</dbReference>
<dbReference type="InterPro" id="IPR002401">
    <property type="entry name" value="Cyt_P450_E_grp-I"/>
</dbReference>
<dbReference type="InterPro" id="IPR036396">
    <property type="entry name" value="Cyt_P450_sf"/>
</dbReference>
<dbReference type="PANTHER" id="PTHR24279">
    <property type="entry name" value="CYTOCHROME P450"/>
    <property type="match status" value="1"/>
</dbReference>
<dbReference type="PANTHER" id="PTHR24279:SF123">
    <property type="entry name" value="CYTOCHROME P450 FAMILY 27 SUBFAMILY A MEMBER 1"/>
    <property type="match status" value="1"/>
</dbReference>
<dbReference type="Pfam" id="PF00067">
    <property type="entry name" value="p450"/>
    <property type="match status" value="1"/>
</dbReference>
<dbReference type="PRINTS" id="PR00463">
    <property type="entry name" value="EP450I"/>
</dbReference>
<dbReference type="PRINTS" id="PR00385">
    <property type="entry name" value="P450"/>
</dbReference>
<dbReference type="SUPFAM" id="SSF48264">
    <property type="entry name" value="Cytochrome P450"/>
    <property type="match status" value="1"/>
</dbReference>
<dbReference type="PROSITE" id="PS00086">
    <property type="entry name" value="CYTOCHROME_P450"/>
    <property type="match status" value="1"/>
</dbReference>
<accession>Q9DBG1</accession>
<reference key="1">
    <citation type="journal article" date="2005" name="Science">
        <title>The transcriptional landscape of the mammalian genome.</title>
        <authorList>
            <person name="Carninci P."/>
            <person name="Kasukawa T."/>
            <person name="Katayama S."/>
            <person name="Gough J."/>
            <person name="Frith M.C."/>
            <person name="Maeda N."/>
            <person name="Oyama R."/>
            <person name="Ravasi T."/>
            <person name="Lenhard B."/>
            <person name="Wells C."/>
            <person name="Kodzius R."/>
            <person name="Shimokawa K."/>
            <person name="Bajic V.B."/>
            <person name="Brenner S.E."/>
            <person name="Batalov S."/>
            <person name="Forrest A.R."/>
            <person name="Zavolan M."/>
            <person name="Davis M.J."/>
            <person name="Wilming L.G."/>
            <person name="Aidinis V."/>
            <person name="Allen J.E."/>
            <person name="Ambesi-Impiombato A."/>
            <person name="Apweiler R."/>
            <person name="Aturaliya R.N."/>
            <person name="Bailey T.L."/>
            <person name="Bansal M."/>
            <person name="Baxter L."/>
            <person name="Beisel K.W."/>
            <person name="Bersano T."/>
            <person name="Bono H."/>
            <person name="Chalk A.M."/>
            <person name="Chiu K.P."/>
            <person name="Choudhary V."/>
            <person name="Christoffels A."/>
            <person name="Clutterbuck D.R."/>
            <person name="Crowe M.L."/>
            <person name="Dalla E."/>
            <person name="Dalrymple B.P."/>
            <person name="de Bono B."/>
            <person name="Della Gatta G."/>
            <person name="di Bernardo D."/>
            <person name="Down T."/>
            <person name="Engstrom P."/>
            <person name="Fagiolini M."/>
            <person name="Faulkner G."/>
            <person name="Fletcher C.F."/>
            <person name="Fukushima T."/>
            <person name="Furuno M."/>
            <person name="Futaki S."/>
            <person name="Gariboldi M."/>
            <person name="Georgii-Hemming P."/>
            <person name="Gingeras T.R."/>
            <person name="Gojobori T."/>
            <person name="Green R.E."/>
            <person name="Gustincich S."/>
            <person name="Harbers M."/>
            <person name="Hayashi Y."/>
            <person name="Hensch T.K."/>
            <person name="Hirokawa N."/>
            <person name="Hill D."/>
            <person name="Huminiecki L."/>
            <person name="Iacono M."/>
            <person name="Ikeo K."/>
            <person name="Iwama A."/>
            <person name="Ishikawa T."/>
            <person name="Jakt M."/>
            <person name="Kanapin A."/>
            <person name="Katoh M."/>
            <person name="Kawasawa Y."/>
            <person name="Kelso J."/>
            <person name="Kitamura H."/>
            <person name="Kitano H."/>
            <person name="Kollias G."/>
            <person name="Krishnan S.P."/>
            <person name="Kruger A."/>
            <person name="Kummerfeld S.K."/>
            <person name="Kurochkin I.V."/>
            <person name="Lareau L.F."/>
            <person name="Lazarevic D."/>
            <person name="Lipovich L."/>
            <person name="Liu J."/>
            <person name="Liuni S."/>
            <person name="McWilliam S."/>
            <person name="Madan Babu M."/>
            <person name="Madera M."/>
            <person name="Marchionni L."/>
            <person name="Matsuda H."/>
            <person name="Matsuzawa S."/>
            <person name="Miki H."/>
            <person name="Mignone F."/>
            <person name="Miyake S."/>
            <person name="Morris K."/>
            <person name="Mottagui-Tabar S."/>
            <person name="Mulder N."/>
            <person name="Nakano N."/>
            <person name="Nakauchi H."/>
            <person name="Ng P."/>
            <person name="Nilsson R."/>
            <person name="Nishiguchi S."/>
            <person name="Nishikawa S."/>
            <person name="Nori F."/>
            <person name="Ohara O."/>
            <person name="Okazaki Y."/>
            <person name="Orlando V."/>
            <person name="Pang K.C."/>
            <person name="Pavan W.J."/>
            <person name="Pavesi G."/>
            <person name="Pesole G."/>
            <person name="Petrovsky N."/>
            <person name="Piazza S."/>
            <person name="Reed J."/>
            <person name="Reid J.F."/>
            <person name="Ring B.Z."/>
            <person name="Ringwald M."/>
            <person name="Rost B."/>
            <person name="Ruan Y."/>
            <person name="Salzberg S.L."/>
            <person name="Sandelin A."/>
            <person name="Schneider C."/>
            <person name="Schoenbach C."/>
            <person name="Sekiguchi K."/>
            <person name="Semple C.A."/>
            <person name="Seno S."/>
            <person name="Sessa L."/>
            <person name="Sheng Y."/>
            <person name="Shibata Y."/>
            <person name="Shimada H."/>
            <person name="Shimada K."/>
            <person name="Silva D."/>
            <person name="Sinclair B."/>
            <person name="Sperling S."/>
            <person name="Stupka E."/>
            <person name="Sugiura K."/>
            <person name="Sultana R."/>
            <person name="Takenaka Y."/>
            <person name="Taki K."/>
            <person name="Tammoja K."/>
            <person name="Tan S.L."/>
            <person name="Tang S."/>
            <person name="Taylor M.S."/>
            <person name="Tegner J."/>
            <person name="Teichmann S.A."/>
            <person name="Ueda H.R."/>
            <person name="van Nimwegen E."/>
            <person name="Verardo R."/>
            <person name="Wei C.L."/>
            <person name="Yagi K."/>
            <person name="Yamanishi H."/>
            <person name="Zabarovsky E."/>
            <person name="Zhu S."/>
            <person name="Zimmer A."/>
            <person name="Hide W."/>
            <person name="Bult C."/>
            <person name="Grimmond S.M."/>
            <person name="Teasdale R.D."/>
            <person name="Liu E.T."/>
            <person name="Brusic V."/>
            <person name="Quackenbush J."/>
            <person name="Wahlestedt C."/>
            <person name="Mattick J.S."/>
            <person name="Hume D.A."/>
            <person name="Kai C."/>
            <person name="Sasaki D."/>
            <person name="Tomaru Y."/>
            <person name="Fukuda S."/>
            <person name="Kanamori-Katayama M."/>
            <person name="Suzuki M."/>
            <person name="Aoki J."/>
            <person name="Arakawa T."/>
            <person name="Iida J."/>
            <person name="Imamura K."/>
            <person name="Itoh M."/>
            <person name="Kato T."/>
            <person name="Kawaji H."/>
            <person name="Kawagashira N."/>
            <person name="Kawashima T."/>
            <person name="Kojima M."/>
            <person name="Kondo S."/>
            <person name="Konno H."/>
            <person name="Nakano K."/>
            <person name="Ninomiya N."/>
            <person name="Nishio T."/>
            <person name="Okada M."/>
            <person name="Plessy C."/>
            <person name="Shibata K."/>
            <person name="Shiraki T."/>
            <person name="Suzuki S."/>
            <person name="Tagami M."/>
            <person name="Waki K."/>
            <person name="Watahiki A."/>
            <person name="Okamura-Oho Y."/>
            <person name="Suzuki H."/>
            <person name="Kawai J."/>
            <person name="Hayashizaki Y."/>
        </authorList>
    </citation>
    <scope>NUCLEOTIDE SEQUENCE [LARGE SCALE MRNA]</scope>
    <source>
        <strain>C57BL/6J</strain>
        <tissue>Liver</tissue>
    </source>
</reference>
<reference key="2">
    <citation type="journal article" date="2004" name="Genome Res.">
        <title>The status, quality, and expansion of the NIH full-length cDNA project: the Mammalian Gene Collection (MGC).</title>
        <authorList>
            <consortium name="The MGC Project Team"/>
        </authorList>
    </citation>
    <scope>NUCLEOTIDE SEQUENCE [LARGE SCALE MRNA]</scope>
    <source>
        <strain>FVB/N</strain>
        <tissue>Liver</tissue>
    </source>
</reference>
<reference key="3">
    <citation type="journal article" date="2010" name="Cell">
        <title>A tissue-specific atlas of mouse protein phosphorylation and expression.</title>
        <authorList>
            <person name="Huttlin E.L."/>
            <person name="Jedrychowski M.P."/>
            <person name="Elias J.E."/>
            <person name="Goswami T."/>
            <person name="Rad R."/>
            <person name="Beausoleil S.A."/>
            <person name="Villen J."/>
            <person name="Haas W."/>
            <person name="Sowa M.E."/>
            <person name="Gygi S.P."/>
        </authorList>
    </citation>
    <scope>IDENTIFICATION BY MASS SPECTROMETRY [LARGE SCALE ANALYSIS]</scope>
    <source>
        <tissue>Brown adipose tissue</tissue>
        <tissue>Liver</tissue>
    </source>
</reference>
<reference key="4">
    <citation type="journal article" date="2013" name="Proc. Natl. Acad. Sci. U.S.A.">
        <title>Label-free quantitative proteomics of the lysine acetylome in mitochondria identifies substrates of SIRT3 in metabolic pathways.</title>
        <authorList>
            <person name="Rardin M.J."/>
            <person name="Newman J.C."/>
            <person name="Held J.M."/>
            <person name="Cusack M.P."/>
            <person name="Sorensen D.J."/>
            <person name="Li B."/>
            <person name="Schilling B."/>
            <person name="Mooney S.D."/>
            <person name="Kahn C.R."/>
            <person name="Verdin E."/>
            <person name="Gibson B.W."/>
        </authorList>
    </citation>
    <scope>ACETYLATION [LARGE SCALE ANALYSIS] AT LYS-142; LYS-232; LYS-285; LYS-296; LYS-375; LYS-512 AND LYS-523</scope>
    <scope>IDENTIFICATION BY MASS SPECTROMETRY [LARGE SCALE ANALYSIS]</scope>
    <source>
        <tissue>Liver</tissue>
    </source>
</reference>
<reference key="5">
    <citation type="journal article" date="2017" name="J. Biol. Chem.">
        <title>Cytochrome P450 27A1 Deficiency and Regional Differences in Brain Sterol Metabolism Cause Preferential Cholestanol Accumulation in the Cerebellum.</title>
        <authorList>
            <person name="Mast N."/>
            <person name="Anderson K.W."/>
            <person name="Lin J.B."/>
            <person name="Li Y."/>
            <person name="Turko I.V."/>
            <person name="Tatsuoka C."/>
            <person name="Bjorkhem I."/>
            <person name="Pikuleva I.A."/>
        </authorList>
    </citation>
    <scope>FUNCTION</scope>
    <scope>TISSUE SPECIFICITY</scope>
    <scope>DISRUPTION PHENOTYPE</scope>
</reference>
<comment type="function">
    <text evidence="4 7">Cytochrome P450 monooxygenase that catalyzes regio- and stereospecific hydroxylation of cholesterol and its derivatives. Hydroxylates (with R stereochemistry) the terminal methyl group of cholesterol side-chain in a three step reaction to yield at first a C26 alcohol, then a C26 aldehyde and finally a C26 acid. Regulates cholesterol homeostasis by catalyzing the conversion of excess cholesterol to bile acids via both the 'neutral' (classic) and the 'acid' (alternative) pathways. May also regulate cholesterol homeostasis via generation of active oxysterols, which act as ligands for NR1H2 and NR1H3 nuclear receptors, modulating the transcription of genes involved in lipid metabolism (By similarity). Plays a role in cholestanol metabolism in the cerebellum (PubMed:28190002). Similarly to cholesterol, hydroxylates cholestanol and may facilitate sterol diffusion through the blood-brain barrier to the systemic circulation for further degradation. Also hydroxylates retinal 7-ketocholesterol, a noxious oxysterol with pro-inflammatory and pro-apoptotic effects, and may play a role in its elimination from the retinal pigment epithelium. May play a redundant role in vitamin D biosynthesis. Catalyzes 25-hydroxylation of vitamin D3 that is required for its conversion to a functionally active form (By similarity).</text>
</comment>
<comment type="catalytic activity">
    <reaction evidence="2 4">
        <text>5beta-cholestane-3alpha,7alpha,12alpha-triol + 6 reduced [adrenodoxin] + 3 O2 + 5 H(+) = (25R)-3alpha,7alpha,12alpha-trihydroxy-5beta-cholestan-26-oate + 6 oxidized [adrenodoxin] + 4 H2O</text>
        <dbReference type="Rhea" id="RHEA:34631"/>
        <dbReference type="Rhea" id="RHEA-COMP:9998"/>
        <dbReference type="Rhea" id="RHEA-COMP:9999"/>
        <dbReference type="ChEBI" id="CHEBI:15377"/>
        <dbReference type="ChEBI" id="CHEBI:15378"/>
        <dbReference type="ChEBI" id="CHEBI:15379"/>
        <dbReference type="ChEBI" id="CHEBI:16496"/>
        <dbReference type="ChEBI" id="CHEBI:33737"/>
        <dbReference type="ChEBI" id="CHEBI:33738"/>
        <dbReference type="ChEBI" id="CHEBI:58734"/>
        <dbReference type="EC" id="1.14.15.15"/>
    </reaction>
    <physiologicalReaction direction="left-to-right" evidence="4">
        <dbReference type="Rhea" id="RHEA:34632"/>
    </physiologicalReaction>
</comment>
<comment type="catalytic activity">
    <reaction evidence="4">
        <text>cholestanol + 2 reduced [adrenodoxin] + O2 + 2 H(+) = (25R)-26-hydroxycholestanol + 2 oxidized [adrenodoxin] + H2O</text>
        <dbReference type="Rhea" id="RHEA:53812"/>
        <dbReference type="Rhea" id="RHEA-COMP:9998"/>
        <dbReference type="Rhea" id="RHEA-COMP:9999"/>
        <dbReference type="ChEBI" id="CHEBI:15377"/>
        <dbReference type="ChEBI" id="CHEBI:15378"/>
        <dbReference type="ChEBI" id="CHEBI:15379"/>
        <dbReference type="ChEBI" id="CHEBI:33737"/>
        <dbReference type="ChEBI" id="CHEBI:33738"/>
        <dbReference type="ChEBI" id="CHEBI:86570"/>
        <dbReference type="ChEBI" id="CHEBI:137688"/>
    </reaction>
    <physiologicalReaction direction="left-to-right" evidence="4">
        <dbReference type="Rhea" id="RHEA:53813"/>
    </physiologicalReaction>
</comment>
<comment type="catalytic activity">
    <reaction evidence="4">
        <text>(25R)-3beta-hydroxycholest-5-en-7-one-26-al + 2 reduced [adrenodoxin] + O2 + H(+) = (25R)-3beta-hydroxycholest-5-en-7-one-26-oate + 2 oxidized [adrenodoxin] + H2O</text>
        <dbReference type="Rhea" id="RHEA:47380"/>
        <dbReference type="Rhea" id="RHEA-COMP:9998"/>
        <dbReference type="Rhea" id="RHEA-COMP:9999"/>
        <dbReference type="ChEBI" id="CHEBI:15377"/>
        <dbReference type="ChEBI" id="CHEBI:15378"/>
        <dbReference type="ChEBI" id="CHEBI:15379"/>
        <dbReference type="ChEBI" id="CHEBI:33737"/>
        <dbReference type="ChEBI" id="CHEBI:33738"/>
        <dbReference type="ChEBI" id="CHEBI:87677"/>
        <dbReference type="ChEBI" id="CHEBI:87678"/>
    </reaction>
    <physiologicalReaction direction="left-to-right" evidence="4">
        <dbReference type="Rhea" id="RHEA:47381"/>
    </physiologicalReaction>
</comment>
<comment type="catalytic activity">
    <reaction evidence="4">
        <text>(25R)-3beta,26-dihydroxycholest-5-en-7-one + 2 reduced [adrenodoxin] + O2 + 2 H(+) = (25R)-3beta-hydroxycholest-5-en-7-one-26-al + 2 oxidized [adrenodoxin] + 2 H2O</text>
        <dbReference type="Rhea" id="RHEA:47376"/>
        <dbReference type="Rhea" id="RHEA-COMP:9998"/>
        <dbReference type="Rhea" id="RHEA-COMP:9999"/>
        <dbReference type="ChEBI" id="CHEBI:15377"/>
        <dbReference type="ChEBI" id="CHEBI:15378"/>
        <dbReference type="ChEBI" id="CHEBI:15379"/>
        <dbReference type="ChEBI" id="CHEBI:33737"/>
        <dbReference type="ChEBI" id="CHEBI:33738"/>
        <dbReference type="ChEBI" id="CHEBI:87653"/>
        <dbReference type="ChEBI" id="CHEBI:87677"/>
    </reaction>
    <physiologicalReaction direction="left-to-right" evidence="4">
        <dbReference type="Rhea" id="RHEA:47377"/>
    </physiologicalReaction>
</comment>
<comment type="catalytic activity">
    <reaction evidence="4">
        <text>7-oxocholesterol + 2 reduced [adrenodoxin] + O2 + 2 H(+) = (25R)-3beta,26-dihydroxycholest-5-en-7-one + 2 oxidized [adrenodoxin] + H2O</text>
        <dbReference type="Rhea" id="RHEA:47344"/>
        <dbReference type="Rhea" id="RHEA-COMP:9998"/>
        <dbReference type="Rhea" id="RHEA-COMP:9999"/>
        <dbReference type="ChEBI" id="CHEBI:15377"/>
        <dbReference type="ChEBI" id="CHEBI:15378"/>
        <dbReference type="ChEBI" id="CHEBI:15379"/>
        <dbReference type="ChEBI" id="CHEBI:33737"/>
        <dbReference type="ChEBI" id="CHEBI:33738"/>
        <dbReference type="ChEBI" id="CHEBI:64294"/>
        <dbReference type="ChEBI" id="CHEBI:87653"/>
    </reaction>
    <physiologicalReaction direction="left-to-right" evidence="4">
        <dbReference type="Rhea" id="RHEA:47345"/>
    </physiologicalReaction>
</comment>
<comment type="catalytic activity">
    <reaction evidence="4">
        <text>calciol + 2 reduced [adrenodoxin] + O2 + 2 H(+) = calcidiol + 2 oxidized [adrenodoxin] + H2O</text>
        <dbReference type="Rhea" id="RHEA:46588"/>
        <dbReference type="Rhea" id="RHEA-COMP:9998"/>
        <dbReference type="Rhea" id="RHEA-COMP:9999"/>
        <dbReference type="ChEBI" id="CHEBI:15377"/>
        <dbReference type="ChEBI" id="CHEBI:15378"/>
        <dbReference type="ChEBI" id="CHEBI:15379"/>
        <dbReference type="ChEBI" id="CHEBI:17933"/>
        <dbReference type="ChEBI" id="CHEBI:28940"/>
        <dbReference type="ChEBI" id="CHEBI:33737"/>
        <dbReference type="ChEBI" id="CHEBI:33738"/>
    </reaction>
    <physiologicalReaction direction="left-to-right" evidence="4">
        <dbReference type="Rhea" id="RHEA:46589"/>
    </physiologicalReaction>
</comment>
<comment type="catalytic activity">
    <reaction evidence="4">
        <text>(25R)-5beta-cholestane-3alpha,7alpha,12alpha,26-tetrol + 2 reduced [adrenodoxin] + O2 + 2 H(+) = (25R)-3alpha,7alpha,12alpha-trihydroxy-5beta-cholestan-26-al + 2 oxidized [adrenodoxin] + 2 H2O</text>
        <dbReference type="Rhea" id="RHEA:40231"/>
        <dbReference type="Rhea" id="RHEA-COMP:9998"/>
        <dbReference type="Rhea" id="RHEA-COMP:9999"/>
        <dbReference type="ChEBI" id="CHEBI:15377"/>
        <dbReference type="ChEBI" id="CHEBI:15378"/>
        <dbReference type="ChEBI" id="CHEBI:15379"/>
        <dbReference type="ChEBI" id="CHEBI:33737"/>
        <dbReference type="ChEBI" id="CHEBI:33738"/>
        <dbReference type="ChEBI" id="CHEBI:48939"/>
        <dbReference type="ChEBI" id="CHEBI:48940"/>
    </reaction>
    <physiologicalReaction direction="left-to-right" evidence="4">
        <dbReference type="Rhea" id="RHEA:40232"/>
    </physiologicalReaction>
</comment>
<comment type="catalytic activity">
    <reaction evidence="4">
        <text>2 reduced [adrenodoxin] + cholesterol + O2 + 2 H(+) = (25R)-cholest-5-ene-3beta,26-diol + 2 oxidized [adrenodoxin] + H2O</text>
        <dbReference type="Rhea" id="RHEA:46400"/>
        <dbReference type="Rhea" id="RHEA-COMP:9998"/>
        <dbReference type="Rhea" id="RHEA-COMP:9999"/>
        <dbReference type="ChEBI" id="CHEBI:15377"/>
        <dbReference type="ChEBI" id="CHEBI:15378"/>
        <dbReference type="ChEBI" id="CHEBI:15379"/>
        <dbReference type="ChEBI" id="CHEBI:16113"/>
        <dbReference type="ChEBI" id="CHEBI:33737"/>
        <dbReference type="ChEBI" id="CHEBI:33738"/>
        <dbReference type="ChEBI" id="CHEBI:76591"/>
    </reaction>
    <physiologicalReaction direction="left-to-right" evidence="4">
        <dbReference type="Rhea" id="RHEA:46401"/>
    </physiologicalReaction>
</comment>
<comment type="catalytic activity">
    <reaction evidence="4">
        <text>(25R)-3beta,4beta-dihydroxycholest-5-en-26-al + 2 reduced [adrenodoxin] + O2 + H(+) = (25R)-3beta,4beta-dihydroxycholest-5-en-26-oate + 2 oxidized [adrenodoxin] + H2O</text>
        <dbReference type="Rhea" id="RHEA:46436"/>
        <dbReference type="Rhea" id="RHEA-COMP:9998"/>
        <dbReference type="Rhea" id="RHEA-COMP:9999"/>
        <dbReference type="ChEBI" id="CHEBI:15377"/>
        <dbReference type="ChEBI" id="CHEBI:15378"/>
        <dbReference type="ChEBI" id="CHEBI:15379"/>
        <dbReference type="ChEBI" id="CHEBI:33737"/>
        <dbReference type="ChEBI" id="CHEBI:33738"/>
        <dbReference type="ChEBI" id="CHEBI:86115"/>
        <dbReference type="ChEBI" id="CHEBI:86116"/>
    </reaction>
    <physiologicalReaction direction="left-to-right" evidence="4">
        <dbReference type="Rhea" id="RHEA:46437"/>
    </physiologicalReaction>
</comment>
<comment type="catalytic activity">
    <reaction evidence="4">
        <text>(25R)-4beta,26-dihydroxycholesterol + 2 reduced [adrenodoxin] + O2 + 2 H(+) = (25R)-3beta,4beta-dihydroxycholest-5-en-26-al + 2 oxidized [adrenodoxin] + 2 H2O</text>
        <dbReference type="Rhea" id="RHEA:46432"/>
        <dbReference type="Rhea" id="RHEA-COMP:9998"/>
        <dbReference type="Rhea" id="RHEA-COMP:9999"/>
        <dbReference type="ChEBI" id="CHEBI:15377"/>
        <dbReference type="ChEBI" id="CHEBI:15378"/>
        <dbReference type="ChEBI" id="CHEBI:15379"/>
        <dbReference type="ChEBI" id="CHEBI:33737"/>
        <dbReference type="ChEBI" id="CHEBI:33738"/>
        <dbReference type="ChEBI" id="CHEBI:86113"/>
        <dbReference type="ChEBI" id="CHEBI:86115"/>
    </reaction>
    <physiologicalReaction direction="left-to-right" evidence="4">
        <dbReference type="Rhea" id="RHEA:46433"/>
    </physiologicalReaction>
</comment>
<comment type="catalytic activity">
    <reaction evidence="4">
        <text>4beta-hydroxycholesterol + 2 reduced [adrenodoxin] + O2 + 2 H(+) = (25R)-4beta,26-dihydroxycholesterol + 2 oxidized [adrenodoxin] + H2O</text>
        <dbReference type="Rhea" id="RHEA:46428"/>
        <dbReference type="Rhea" id="RHEA-COMP:9998"/>
        <dbReference type="Rhea" id="RHEA-COMP:9999"/>
        <dbReference type="ChEBI" id="CHEBI:15377"/>
        <dbReference type="ChEBI" id="CHEBI:15378"/>
        <dbReference type="ChEBI" id="CHEBI:15379"/>
        <dbReference type="ChEBI" id="CHEBI:33737"/>
        <dbReference type="ChEBI" id="CHEBI:33738"/>
        <dbReference type="ChEBI" id="CHEBI:85778"/>
        <dbReference type="ChEBI" id="CHEBI:86113"/>
    </reaction>
    <physiologicalReaction direction="left-to-right" evidence="4">
        <dbReference type="Rhea" id="RHEA:46429"/>
    </physiologicalReaction>
</comment>
<comment type="catalytic activity">
    <reaction evidence="4">
        <text>(25R)-3beta-hydroxy-5-cholesten-26-al + 2 reduced [adrenodoxin] + O2 + H(+) = (25R)-3beta-hydroxy-5-cholestenoate + 2 oxidized [adrenodoxin] + H2O</text>
        <dbReference type="Rhea" id="RHEA:45236"/>
        <dbReference type="Rhea" id="RHEA-COMP:9998"/>
        <dbReference type="Rhea" id="RHEA-COMP:9999"/>
        <dbReference type="ChEBI" id="CHEBI:15377"/>
        <dbReference type="ChEBI" id="CHEBI:15378"/>
        <dbReference type="ChEBI" id="CHEBI:15379"/>
        <dbReference type="ChEBI" id="CHEBI:33737"/>
        <dbReference type="ChEBI" id="CHEBI:33738"/>
        <dbReference type="ChEBI" id="CHEBI:86096"/>
        <dbReference type="ChEBI" id="CHEBI:86098"/>
    </reaction>
    <physiologicalReaction direction="left-to-right" evidence="4">
        <dbReference type="Rhea" id="RHEA:45237"/>
    </physiologicalReaction>
</comment>
<comment type="catalytic activity">
    <reaction evidence="4">
        <text>(25R)-cholest-5-ene-3beta,26-diol + 2 reduced [adrenodoxin] + O2 + 2 H(+) = (25R)-3beta-hydroxy-5-cholesten-26-al + 2 oxidized [adrenodoxin] + 2 H2O</text>
        <dbReference type="Rhea" id="RHEA:46092"/>
        <dbReference type="Rhea" id="RHEA-COMP:9998"/>
        <dbReference type="Rhea" id="RHEA-COMP:9999"/>
        <dbReference type="ChEBI" id="CHEBI:15377"/>
        <dbReference type="ChEBI" id="CHEBI:15378"/>
        <dbReference type="ChEBI" id="CHEBI:15379"/>
        <dbReference type="ChEBI" id="CHEBI:33737"/>
        <dbReference type="ChEBI" id="CHEBI:33738"/>
        <dbReference type="ChEBI" id="CHEBI:76591"/>
        <dbReference type="ChEBI" id="CHEBI:86096"/>
    </reaction>
    <physiologicalReaction direction="left-to-right" evidence="4">
        <dbReference type="Rhea" id="RHEA:46093"/>
    </physiologicalReaction>
</comment>
<comment type="catalytic activity">
    <reaction evidence="4">
        <text>(25R)-3alpha,7alpha,12alpha-trihydroxy-5beta-cholestan-26-al + 2 reduced [adrenodoxin] + O2 + H(+) = (25R)-3alpha,7alpha,12alpha-trihydroxy-5beta-cholestan-26-oate + 2 oxidized [adrenodoxin] + H2O</text>
        <dbReference type="Rhea" id="RHEA:34627"/>
        <dbReference type="Rhea" id="RHEA-COMP:9998"/>
        <dbReference type="Rhea" id="RHEA-COMP:9999"/>
        <dbReference type="ChEBI" id="CHEBI:15377"/>
        <dbReference type="ChEBI" id="CHEBI:15378"/>
        <dbReference type="ChEBI" id="CHEBI:15379"/>
        <dbReference type="ChEBI" id="CHEBI:33737"/>
        <dbReference type="ChEBI" id="CHEBI:33738"/>
        <dbReference type="ChEBI" id="CHEBI:48940"/>
        <dbReference type="ChEBI" id="CHEBI:58734"/>
    </reaction>
    <physiologicalReaction direction="left-to-right" evidence="4">
        <dbReference type="Rhea" id="RHEA:34628"/>
    </physiologicalReaction>
</comment>
<comment type="catalytic activity">
    <reaction evidence="4">
        <text>5beta-cholestane-3alpha,7alpha,12alpha-triol + 2 reduced [adrenodoxin] + O2 + 2 H(+) = (25R)-5beta-cholestane-3alpha,7alpha,12alpha,26-tetrol + 2 oxidized [adrenodoxin] + H2O</text>
        <dbReference type="Rhea" id="RHEA:14373"/>
        <dbReference type="Rhea" id="RHEA-COMP:9998"/>
        <dbReference type="Rhea" id="RHEA-COMP:9999"/>
        <dbReference type="ChEBI" id="CHEBI:15377"/>
        <dbReference type="ChEBI" id="CHEBI:15378"/>
        <dbReference type="ChEBI" id="CHEBI:15379"/>
        <dbReference type="ChEBI" id="CHEBI:16496"/>
        <dbReference type="ChEBI" id="CHEBI:33737"/>
        <dbReference type="ChEBI" id="CHEBI:33738"/>
        <dbReference type="ChEBI" id="CHEBI:48939"/>
    </reaction>
    <physiologicalReaction direction="left-to-right" evidence="4">
        <dbReference type="Rhea" id="RHEA:14374"/>
    </physiologicalReaction>
</comment>
<comment type="cofactor">
    <cofactor evidence="2">
        <name>heme</name>
        <dbReference type="ChEBI" id="CHEBI:30413"/>
    </cofactor>
</comment>
<comment type="pathway">
    <text evidence="4">Hormone biosynthesis; cholecalciferol biosynthesis.</text>
</comment>
<comment type="pathway">
    <text evidence="4">Steroid metabolism; cholesterol degradation.</text>
</comment>
<comment type="pathway">
    <text evidence="4">Lipid metabolism; bile acid biosynthesis.</text>
</comment>
<comment type="subunit">
    <text evidence="3">Interacts with HSP70; this interaction is required for initial targeting to mitochondria.</text>
</comment>
<comment type="subcellular location">
    <subcellularLocation>
        <location evidence="3">Mitochondrion inner membrane</location>
        <topology evidence="3">Peripheral membrane protein</topology>
    </subcellularLocation>
    <text evidence="3">Post-translationally targeted to mitochondria. All three of the receptor proteins in the TOM complex, TOMM70, TOMM20 and TOMM22 are required for the translocation across the mitochondrial outer membrane. After translocation into the matrix, associates with the inner membrane as a membrane extrinsic protein.</text>
</comment>
<comment type="tissue specificity">
    <text evidence="7">Expressed in the gray and white matter of cerebellum (at protein level).</text>
</comment>
<comment type="PTM">
    <text>Acetylation of Lys-125 and Lys-285 is observed in liver mitochondria from fasted mice but not from fed mice.</text>
</comment>
<comment type="disruption phenotype">
    <text evidence="7">Mutant mice show cholestanol accumulation in the cerebellum.</text>
</comment>
<comment type="similarity">
    <text evidence="8">Belongs to the cytochrome P450 family.</text>
</comment>
<sequence length="533" mass="60720">MAAWSRTRLRWTLLDPRVVGRGLCPQGARAKATIPAALQAQESTEGPGTGQDRPRLRSPAELPGTGTLQFLFQLFLQGYVLHLPDLQVLNKTKYGPMWTTSFGTYTNVNLASAPLLEQVMRQEGKYPIRDHMDQWKDHRDHKGLTYGIFIAQGEQWYHLRQALKQRLLKPDEAALYTDALNEVISDFITRLDQVRAESESGDQVPDMAHLLYHLALEAITYILFEKRIGCLKPSIPEDTAAFIRSVAIMFQNSVYITFLPKWTRPLLPFWKRYLNGWDNIFSFGKKLIDEKVQELKAQLQETGPDGVRVSGYLHFLLTNELLSTQETIGTFPELLLAGVDTTSNTLTWALYHLSKSPEIQEALHKEVTGVVPFGKVPQHKDFAHMPLLKAVIKETLRLYPVVPTNSRIITEKETEINGFLFPKNTQFVLCHYVVSRDPSVFPEPNSFQPHRWLRKKEADNPGILHPFGSVPFGYGVRSCLGRRIAELEMQLMLSRLVQKYEIALAPGMGEVKTVSRIVLVPSKKVRLHFLQRQ</sequence>
<feature type="transit peptide" description="Mitochondrion" evidence="1">
    <location>
        <begin position="1"/>
        <end position="32"/>
    </location>
</feature>
<feature type="chain" id="PRO_0000003619" description="Sterol 26-hydroxylase, mitochondrial">
    <location>
        <begin position="33"/>
        <end position="533"/>
    </location>
</feature>
<feature type="region of interest" description="Disordered" evidence="6">
    <location>
        <begin position="34"/>
        <end position="60"/>
    </location>
</feature>
<feature type="region of interest" description="Sterol-binding" evidence="5">
    <location>
        <begin position="386"/>
        <end position="400"/>
    </location>
</feature>
<feature type="binding site" description="axial binding residue" evidence="1">
    <location>
        <position position="479"/>
    </location>
    <ligand>
        <name>heme</name>
        <dbReference type="ChEBI" id="CHEBI:30413"/>
    </ligand>
    <ligandPart>
        <name>Fe</name>
        <dbReference type="ChEBI" id="CHEBI:18248"/>
    </ligandPart>
</feature>
<feature type="modified residue" description="N6-acetyllysine" evidence="10">
    <location>
        <position position="142"/>
    </location>
</feature>
<feature type="modified residue" description="N6-acetyllysine" evidence="10">
    <location>
        <position position="232"/>
    </location>
</feature>
<feature type="modified residue" description="N6-acetyllysine" evidence="10">
    <location>
        <position position="285"/>
    </location>
</feature>
<feature type="modified residue" description="N6-acetyllysine" evidence="10">
    <location>
        <position position="296"/>
    </location>
</feature>
<feature type="modified residue" description="N6-acetyllysine" evidence="10">
    <location>
        <position position="375"/>
    </location>
</feature>
<feature type="modified residue" description="N6-acetyllysine" evidence="10">
    <location>
        <position position="512"/>
    </location>
</feature>
<feature type="modified residue" description="N6-acetyllysine" evidence="10">
    <location>
        <position position="523"/>
    </location>
</feature>
<proteinExistence type="evidence at protein level"/>